<name>ALF1_THETK</name>
<evidence type="ECO:0000269" key="1">
    <source>
    </source>
</evidence>
<evidence type="ECO:0000269" key="2">
    <source>
    </source>
</evidence>
<evidence type="ECO:0000269" key="3">
    <source>
    </source>
</evidence>
<evidence type="ECO:0000305" key="4"/>
<evidence type="ECO:0007829" key="5">
    <source>
        <dbReference type="PDB" id="1W8S"/>
    </source>
</evidence>
<protein>
    <recommendedName>
        <fullName>Fructose-bisphosphate aldolase class 1</fullName>
        <ecNumber>4.1.2.13</ecNumber>
    </recommendedName>
    <alternativeName>
        <fullName>Fructose-bisphosphate aldolase class I</fullName>
        <shortName>FBP aldolase</shortName>
        <shortName>FBPA</shortName>
    </alternativeName>
</protein>
<proteinExistence type="evidence at protein level"/>
<sequence>MANLTEKFLRIFARRGKSIILAYDHGIEHGPADFMDNPDSADPEYILRLARDAGFDGVVFQRGIAEKYYDGSVPLILKLNGKTTLYNGEPVSVANCSVEEAVSLGASAVGYTIYPGSGFEWKMFEELARIKRDAVKFDLPLVVWSYPRGGKVVNETAPEIVAYAARIALELGADAMKIKYTGDPKTFSWAVKVAGKVPVLMSGGPKTKTEEDFLKQVEGVLEAGALGIAVGRNVWQRRDALKFARALAELVYGGKKLAEPLNV</sequence>
<accession>P58315</accession>
<accession>G4RK17</accession>
<feature type="chain" id="PRO_0000138952" description="Fructose-bisphosphate aldolase class 1">
    <location>
        <begin position="1"/>
        <end position="263"/>
    </location>
</feature>
<feature type="active site" description="Proton donor">
    <location>
        <position position="146"/>
    </location>
</feature>
<feature type="active site" description="Schiff-base intermediate with dihydroxyacetone-P">
    <location>
        <position position="177"/>
    </location>
</feature>
<feature type="binding site">
    <location>
        <begin position="24"/>
        <end position="25"/>
    </location>
    <ligand>
        <name>substrate</name>
    </ligand>
</feature>
<feature type="binding site">
    <location>
        <position position="29"/>
    </location>
    <ligand>
        <name>substrate</name>
    </ligand>
</feature>
<feature type="binding site">
    <location>
        <position position="33"/>
    </location>
    <ligand>
        <name>substrate</name>
    </ligand>
</feature>
<feature type="binding site">
    <location>
        <position position="144"/>
    </location>
    <ligand>
        <name>substrate</name>
    </ligand>
</feature>
<feature type="binding site">
    <location>
        <position position="148"/>
    </location>
    <ligand>
        <name>substrate</name>
    </ligand>
</feature>
<feature type="binding site">
    <location>
        <begin position="177"/>
        <end position="179"/>
    </location>
    <ligand>
        <name>substrate</name>
    </ligand>
</feature>
<feature type="binding site">
    <location>
        <begin position="202"/>
        <end position="204"/>
    </location>
    <ligand>
        <name>substrate</name>
    </ligand>
</feature>
<feature type="binding site">
    <location>
        <begin position="231"/>
        <end position="232"/>
    </location>
    <ligand>
        <name>substrate</name>
    </ligand>
</feature>
<feature type="mutagenesis site" description="Loss of FBP aldolase activity; when associated with F-146." evidence="3">
    <original>W</original>
    <variation>E</variation>
    <location>
        <position position="144"/>
    </location>
</feature>
<feature type="mutagenesis site" description="The catalytic activity is at least 3-fold lower than for the wild-type. Loss of FBP aldolase activity; when associated with E-144." evidence="3">
    <original>Y</original>
    <variation>F</variation>
    <location>
        <position position="146"/>
    </location>
</feature>
<feature type="helix" evidence="5">
    <location>
        <begin position="4"/>
        <end position="12"/>
    </location>
</feature>
<feature type="strand" evidence="5">
    <location>
        <begin position="16"/>
        <end position="22"/>
    </location>
</feature>
<feature type="helix" evidence="5">
    <location>
        <begin position="25"/>
        <end position="28"/>
    </location>
</feature>
<feature type="helix" evidence="5">
    <location>
        <begin position="31"/>
        <end position="34"/>
    </location>
</feature>
<feature type="strand" evidence="5">
    <location>
        <begin position="35"/>
        <end position="37"/>
    </location>
</feature>
<feature type="helix" evidence="5">
    <location>
        <begin position="38"/>
        <end position="41"/>
    </location>
</feature>
<feature type="helix" evidence="5">
    <location>
        <begin position="43"/>
        <end position="53"/>
    </location>
</feature>
<feature type="strand" evidence="5">
    <location>
        <begin position="56"/>
        <end position="60"/>
    </location>
</feature>
<feature type="helix" evidence="5">
    <location>
        <begin position="62"/>
        <end position="68"/>
    </location>
</feature>
<feature type="strand" evidence="5">
    <location>
        <begin position="71"/>
        <end position="73"/>
    </location>
</feature>
<feature type="strand" evidence="5">
    <location>
        <begin position="75"/>
        <end position="78"/>
    </location>
</feature>
<feature type="strand" evidence="5">
    <location>
        <begin position="93"/>
        <end position="96"/>
    </location>
</feature>
<feature type="helix" evidence="5">
    <location>
        <begin position="98"/>
        <end position="103"/>
    </location>
</feature>
<feature type="strand" evidence="5">
    <location>
        <begin position="107"/>
        <end position="113"/>
    </location>
</feature>
<feature type="helix" evidence="5">
    <location>
        <begin position="120"/>
        <end position="137"/>
    </location>
</feature>
<feature type="strand" evidence="5">
    <location>
        <begin position="141"/>
        <end position="145"/>
    </location>
</feature>
<feature type="helix" evidence="5">
    <location>
        <begin position="158"/>
        <end position="171"/>
    </location>
</feature>
<feature type="strand" evidence="5">
    <location>
        <begin position="174"/>
        <end position="179"/>
    </location>
</feature>
<feature type="helix" evidence="5">
    <location>
        <begin position="184"/>
        <end position="193"/>
    </location>
</feature>
<feature type="turn" evidence="5">
    <location>
        <begin position="194"/>
        <end position="196"/>
    </location>
</feature>
<feature type="strand" evidence="5">
    <location>
        <begin position="199"/>
        <end position="202"/>
    </location>
</feature>
<feature type="helix" evidence="5">
    <location>
        <begin position="210"/>
        <end position="222"/>
    </location>
</feature>
<feature type="strand" evidence="5">
    <location>
        <begin position="227"/>
        <end position="231"/>
    </location>
</feature>
<feature type="helix" evidence="5">
    <location>
        <begin position="232"/>
        <end position="235"/>
    </location>
</feature>
<feature type="helix" evidence="5">
    <location>
        <begin position="240"/>
        <end position="251"/>
    </location>
</feature>
<reference key="1">
    <citation type="journal article" date="2001" name="J. Biol. Chem.">
        <title>Archaeal fructose-1,6-bisphosphate aldolases constitute a new family of archaeal type class I aldolases.</title>
        <authorList>
            <person name="Siebers B."/>
            <person name="Brinkmann H."/>
            <person name="Doerr C."/>
            <person name="Tjaden B."/>
            <person name="Lilie H."/>
            <person name="van der Oost J."/>
            <person name="Verhees C.H."/>
        </authorList>
    </citation>
    <scope>NUCLEOTIDE SEQUENCE [GENOMIC DNA]</scope>
    <scope>CATALYTIC ACTIVITY</scope>
    <scope>ACTIVITY REGULATION</scope>
    <scope>SUBUNIT</scope>
    <source>
        <strain>ATCC 35583 / DSM 2078 / JCM 9277 / NBRC 100435 / Kra 1</strain>
    </source>
</reference>
<reference key="2">
    <citation type="journal article" date="2011" name="PLoS ONE">
        <title>The complete genome sequence of Thermoproteus tenax: a physiologically versatile member of the Crenarchaeota.</title>
        <authorList>
            <person name="Siebers B."/>
            <person name="Zaparty M."/>
            <person name="Raddatz G."/>
            <person name="Tjaden B."/>
            <person name="Albers S.V."/>
            <person name="Bell S.D."/>
            <person name="Blombach F."/>
            <person name="Kletzin A."/>
            <person name="Kyrpides N."/>
            <person name="Lanz C."/>
            <person name="Plagens A."/>
            <person name="Rampp M."/>
            <person name="Rosinus A."/>
            <person name="von Jan M."/>
            <person name="Makarova K.S."/>
            <person name="Klenk H.P."/>
            <person name="Schuster S.C."/>
            <person name="Hensel R."/>
        </authorList>
    </citation>
    <scope>NUCLEOTIDE SEQUENCE [LARGE SCALE GENOMIC DNA]</scope>
    <source>
        <strain>ATCC 35583 / DSM 2078 / JCM 9277 / NBRC 100435 / Kra 1</strain>
    </source>
</reference>
<reference key="3">
    <citation type="journal article" date="2003" name="J. Biol. Chem.">
        <title>Crystal structure of an archaeal class I aldolase and the evolution of (betaalpha)8 barrel proteins.</title>
        <authorList>
            <person name="Lorentzen E."/>
            <person name="Pohl E."/>
            <person name="Zwart P."/>
            <person name="Stark A."/>
            <person name="Russell R.B."/>
            <person name="Knura T."/>
            <person name="Hensel R."/>
            <person name="Siebers B."/>
        </authorList>
    </citation>
    <scope>X-RAY CRYSTALLOGRAPHY (1.90 ANGSTROMS) IN COMPLEX WITH SUBSTRATE ANALOGS</scope>
    <scope>SUBUNIT</scope>
</reference>
<reference key="4">
    <citation type="journal article" date="2005" name="Biochemistry">
        <title>Mechanism of the Schiff base forming fructose-1,6-bisphosphate aldolase: structural analysis of reaction intermediates.</title>
        <authorList>
            <person name="Lorentzen E."/>
            <person name="Siebers B."/>
            <person name="Hensel R."/>
            <person name="Pohl E."/>
        </authorList>
    </citation>
    <scope>X-RAY CRYSTALLOGRAPHY (1.85 ANGSTROMS) OF MUTANT GLU-144 AND PHE-146 IN COMPLEX WITH SUBSTRATE ANALOGS</scope>
    <scope>MUTAGENESIS OF TRP-144 AND TYR-146</scope>
    <scope>REACTION MECHANISM</scope>
    <scope>SUBUNIT</scope>
</reference>
<keyword id="KW-0002">3D-structure</keyword>
<keyword id="KW-0963">Cytoplasm</keyword>
<keyword id="KW-0324">Glycolysis</keyword>
<keyword id="KW-0456">Lyase</keyword>
<keyword id="KW-1185">Reference proteome</keyword>
<keyword id="KW-0704">Schiff base</keyword>
<comment type="function">
    <text>Catalyzes the reversible cleavage of fructose 1,6-bisphosphate (FBP) to glyceraldehyde 3-phosphate (GAP) and dihydroxyacetone phosphate (DHAP).</text>
</comment>
<comment type="catalytic activity">
    <reaction evidence="1">
        <text>beta-D-fructose 1,6-bisphosphate = D-glyceraldehyde 3-phosphate + dihydroxyacetone phosphate</text>
        <dbReference type="Rhea" id="RHEA:14729"/>
        <dbReference type="ChEBI" id="CHEBI:32966"/>
        <dbReference type="ChEBI" id="CHEBI:57642"/>
        <dbReference type="ChEBI" id="CHEBI:59776"/>
        <dbReference type="EC" id="4.1.2.13"/>
    </reaction>
</comment>
<comment type="activity regulation">
    <text evidence="1">Activated by citrate.</text>
</comment>
<comment type="subunit">
    <text evidence="1 2 3">Homodecamer (dimer of pentamers).</text>
</comment>
<comment type="subcellular location">
    <subcellularLocation>
        <location evidence="4">Cytoplasm</location>
    </subcellularLocation>
</comment>
<comment type="similarity">
    <text evidence="4">Belongs to the DeoC/FbaB aldolase family.</text>
</comment>
<gene>
    <name type="primary">fba</name>
    <name type="ordered locus">TTX_1278</name>
</gene>
<organism>
    <name type="scientific">Thermoproteus tenax (strain ATCC 35583 / DSM 2078 / JCM 9277 / NBRC 100435 / Kra 1)</name>
    <dbReference type="NCBI Taxonomy" id="768679"/>
    <lineage>
        <taxon>Archaea</taxon>
        <taxon>Thermoproteota</taxon>
        <taxon>Thermoprotei</taxon>
        <taxon>Thermoproteales</taxon>
        <taxon>Thermoproteaceae</taxon>
        <taxon>Thermoproteus</taxon>
    </lineage>
</organism>
<dbReference type="EC" id="4.1.2.13"/>
<dbReference type="EMBL" id="AJ310483">
    <property type="protein sequence ID" value="CAC48235.1"/>
    <property type="molecule type" value="Genomic_DNA"/>
</dbReference>
<dbReference type="EMBL" id="FN869859">
    <property type="protein sequence ID" value="CCC81912.1"/>
    <property type="molecule type" value="Genomic_DNA"/>
</dbReference>
<dbReference type="RefSeq" id="WP_014127167.1">
    <property type="nucleotide sequence ID" value="NC_016070.1"/>
</dbReference>
<dbReference type="PDB" id="1OJX">
    <property type="method" value="X-ray"/>
    <property type="resolution" value="1.90 A"/>
    <property type="chains" value="A/B/C/D/E/F/G/H/I/J=1-263"/>
</dbReference>
<dbReference type="PDB" id="1OK4">
    <property type="method" value="X-ray"/>
    <property type="resolution" value="2.10 A"/>
    <property type="chains" value="A/B/C/D/E/F/G/H/I/J=1-263"/>
</dbReference>
<dbReference type="PDB" id="1OK6">
    <property type="method" value="X-ray"/>
    <property type="resolution" value="2.40 A"/>
    <property type="chains" value="A/B/C/D/E/F/G/H/I/J=1-263"/>
</dbReference>
<dbReference type="PDB" id="1W8S">
    <property type="method" value="X-ray"/>
    <property type="resolution" value="1.85 A"/>
    <property type="chains" value="A/B/C/D/E/F/G/H/I/J=1-263"/>
</dbReference>
<dbReference type="PDB" id="2YCE">
    <property type="method" value="X-ray"/>
    <property type="resolution" value="1.93 A"/>
    <property type="chains" value="A/B/C/D/E/F/G/H/I/J=1-263"/>
</dbReference>
<dbReference type="PDBsum" id="1OJX"/>
<dbReference type="PDBsum" id="1OK4"/>
<dbReference type="PDBsum" id="1OK6"/>
<dbReference type="PDBsum" id="1W8S"/>
<dbReference type="PDBsum" id="2YCE"/>
<dbReference type="SMR" id="P58315"/>
<dbReference type="STRING" id="768679.TTX_1278"/>
<dbReference type="PaxDb" id="768679-TTX_1278"/>
<dbReference type="GeneID" id="11262157"/>
<dbReference type="KEGG" id="ttn:TTX_1278"/>
<dbReference type="PATRIC" id="fig|768679.9.peg.1292"/>
<dbReference type="eggNOG" id="arCOG04044">
    <property type="taxonomic scope" value="Archaea"/>
</dbReference>
<dbReference type="HOGENOM" id="CLU_057069_2_2_2"/>
<dbReference type="OrthoDB" id="6329at2157"/>
<dbReference type="BRENDA" id="4.1.2.13">
    <property type="organism ID" value="6329"/>
</dbReference>
<dbReference type="SABIO-RK" id="P58315"/>
<dbReference type="EvolutionaryTrace" id="P58315"/>
<dbReference type="Proteomes" id="UP000002654">
    <property type="component" value="Chromosome"/>
</dbReference>
<dbReference type="GO" id="GO:0005737">
    <property type="term" value="C:cytoplasm"/>
    <property type="evidence" value="ECO:0007669"/>
    <property type="project" value="UniProtKB-SubCell"/>
</dbReference>
<dbReference type="GO" id="GO:0004332">
    <property type="term" value="F:fructose-bisphosphate aldolase activity"/>
    <property type="evidence" value="ECO:0007669"/>
    <property type="project" value="UniProtKB-EC"/>
</dbReference>
<dbReference type="GO" id="GO:0006096">
    <property type="term" value="P:glycolytic process"/>
    <property type="evidence" value="ECO:0007669"/>
    <property type="project" value="UniProtKB-KW"/>
</dbReference>
<dbReference type="CDD" id="cd00958">
    <property type="entry name" value="DhnA"/>
    <property type="match status" value="1"/>
</dbReference>
<dbReference type="Gene3D" id="3.20.20.70">
    <property type="entry name" value="Aldolase class I"/>
    <property type="match status" value="1"/>
</dbReference>
<dbReference type="InterPro" id="IPR013785">
    <property type="entry name" value="Aldolase_TIM"/>
</dbReference>
<dbReference type="InterPro" id="IPR002915">
    <property type="entry name" value="DeoC/FbaB/LacD_aldolase"/>
</dbReference>
<dbReference type="InterPro" id="IPR050456">
    <property type="entry name" value="DeoC/FbaB_aldolase"/>
</dbReference>
<dbReference type="InterPro" id="IPR041720">
    <property type="entry name" value="FbaB-like"/>
</dbReference>
<dbReference type="PANTHER" id="PTHR47916:SF1">
    <property type="entry name" value="3-HYDROXY-5-PHOSPHONOOXYPENTANE-2,4-DIONE THIOLASE"/>
    <property type="match status" value="1"/>
</dbReference>
<dbReference type="PANTHER" id="PTHR47916">
    <property type="entry name" value="FRUCTOSE-BISPHOSPHATE ALDOLASE CLASS 1"/>
    <property type="match status" value="1"/>
</dbReference>
<dbReference type="Pfam" id="PF01791">
    <property type="entry name" value="DeoC"/>
    <property type="match status" value="1"/>
</dbReference>
<dbReference type="PIRSF" id="PIRSF038992">
    <property type="entry name" value="Aldolase_Ia"/>
    <property type="match status" value="1"/>
</dbReference>
<dbReference type="SMART" id="SM01133">
    <property type="entry name" value="DeoC"/>
    <property type="match status" value="1"/>
</dbReference>
<dbReference type="SUPFAM" id="SSF51569">
    <property type="entry name" value="Aldolase"/>
    <property type="match status" value="1"/>
</dbReference>